<reference key="1">
    <citation type="submission" date="2006-12" db="EMBL/GenBank/DDBJ databases">
        <title>Complete sequence of chromosome 1 of Paracoccus denitrificans PD1222.</title>
        <authorList>
            <person name="Copeland A."/>
            <person name="Lucas S."/>
            <person name="Lapidus A."/>
            <person name="Barry K."/>
            <person name="Detter J.C."/>
            <person name="Glavina del Rio T."/>
            <person name="Hammon N."/>
            <person name="Israni S."/>
            <person name="Dalin E."/>
            <person name="Tice H."/>
            <person name="Pitluck S."/>
            <person name="Munk A.C."/>
            <person name="Brettin T."/>
            <person name="Bruce D."/>
            <person name="Han C."/>
            <person name="Tapia R."/>
            <person name="Gilna P."/>
            <person name="Schmutz J."/>
            <person name="Larimer F."/>
            <person name="Land M."/>
            <person name="Hauser L."/>
            <person name="Kyrpides N."/>
            <person name="Lykidis A."/>
            <person name="Spiro S."/>
            <person name="Richardson D.J."/>
            <person name="Moir J.W.B."/>
            <person name="Ferguson S.J."/>
            <person name="van Spanning R.J.M."/>
            <person name="Richardson P."/>
        </authorList>
    </citation>
    <scope>NUCLEOTIDE SEQUENCE [LARGE SCALE GENOMIC DNA]</scope>
    <source>
        <strain>Pd 1222</strain>
    </source>
</reference>
<name>RLMH_PARDP</name>
<comment type="function">
    <text evidence="1">Specifically methylates the pseudouridine at position 1915 (m3Psi1915) in 23S rRNA.</text>
</comment>
<comment type="catalytic activity">
    <reaction evidence="1">
        <text>pseudouridine(1915) in 23S rRNA + S-adenosyl-L-methionine = N(3)-methylpseudouridine(1915) in 23S rRNA + S-adenosyl-L-homocysteine + H(+)</text>
        <dbReference type="Rhea" id="RHEA:42752"/>
        <dbReference type="Rhea" id="RHEA-COMP:10221"/>
        <dbReference type="Rhea" id="RHEA-COMP:10222"/>
        <dbReference type="ChEBI" id="CHEBI:15378"/>
        <dbReference type="ChEBI" id="CHEBI:57856"/>
        <dbReference type="ChEBI" id="CHEBI:59789"/>
        <dbReference type="ChEBI" id="CHEBI:65314"/>
        <dbReference type="ChEBI" id="CHEBI:74486"/>
        <dbReference type="EC" id="2.1.1.177"/>
    </reaction>
</comment>
<comment type="subunit">
    <text evidence="1">Homodimer.</text>
</comment>
<comment type="subcellular location">
    <subcellularLocation>
        <location evidence="1">Cytoplasm</location>
    </subcellularLocation>
</comment>
<comment type="similarity">
    <text evidence="1">Belongs to the RNA methyltransferase RlmH family.</text>
</comment>
<keyword id="KW-0963">Cytoplasm</keyword>
<keyword id="KW-0489">Methyltransferase</keyword>
<keyword id="KW-1185">Reference proteome</keyword>
<keyword id="KW-0698">rRNA processing</keyword>
<keyword id="KW-0949">S-adenosyl-L-methionine</keyword>
<keyword id="KW-0808">Transferase</keyword>
<evidence type="ECO:0000255" key="1">
    <source>
        <dbReference type="HAMAP-Rule" id="MF_00658"/>
    </source>
</evidence>
<accession>A1B510</accession>
<sequence>MRMVIAAVGRLRQGPEAKLIADYLDRHAKAGRALGLPPVTLAEVEDKRGGGMVAEAALLARAIPQGAALVVLDERGQMLSSPEFAARIAGWRDQARDVAFVIGGADGIDPGLRDGADLAISFGRMVWPHMLVRVMLAEQIYRATTILAGNPYHRE</sequence>
<organism>
    <name type="scientific">Paracoccus denitrificans (strain Pd 1222)</name>
    <dbReference type="NCBI Taxonomy" id="318586"/>
    <lineage>
        <taxon>Bacteria</taxon>
        <taxon>Pseudomonadati</taxon>
        <taxon>Pseudomonadota</taxon>
        <taxon>Alphaproteobacteria</taxon>
        <taxon>Rhodobacterales</taxon>
        <taxon>Paracoccaceae</taxon>
        <taxon>Paracoccus</taxon>
    </lineage>
</organism>
<proteinExistence type="inferred from homology"/>
<gene>
    <name evidence="1" type="primary">rlmH</name>
    <name type="ordered locus">Pden_2517</name>
</gene>
<feature type="chain" id="PRO_1000061816" description="Ribosomal RNA large subunit methyltransferase H">
    <location>
        <begin position="1"/>
        <end position="155"/>
    </location>
</feature>
<feature type="binding site" evidence="1">
    <location>
        <position position="72"/>
    </location>
    <ligand>
        <name>S-adenosyl-L-methionine</name>
        <dbReference type="ChEBI" id="CHEBI:59789"/>
    </ligand>
</feature>
<feature type="binding site" evidence="1">
    <location>
        <position position="103"/>
    </location>
    <ligand>
        <name>S-adenosyl-L-methionine</name>
        <dbReference type="ChEBI" id="CHEBI:59789"/>
    </ligand>
</feature>
<feature type="binding site" evidence="1">
    <location>
        <begin position="122"/>
        <end position="127"/>
    </location>
    <ligand>
        <name>S-adenosyl-L-methionine</name>
        <dbReference type="ChEBI" id="CHEBI:59789"/>
    </ligand>
</feature>
<dbReference type="EC" id="2.1.1.177" evidence="1"/>
<dbReference type="EMBL" id="CP000489">
    <property type="protein sequence ID" value="ABL70604.1"/>
    <property type="molecule type" value="Genomic_DNA"/>
</dbReference>
<dbReference type="RefSeq" id="WP_011748797.1">
    <property type="nucleotide sequence ID" value="NC_008686.1"/>
</dbReference>
<dbReference type="SMR" id="A1B510"/>
<dbReference type="STRING" id="318586.Pden_2517"/>
<dbReference type="EnsemblBacteria" id="ABL70604">
    <property type="protein sequence ID" value="ABL70604"/>
    <property type="gene ID" value="Pden_2517"/>
</dbReference>
<dbReference type="GeneID" id="93450910"/>
<dbReference type="KEGG" id="pde:Pden_2517"/>
<dbReference type="eggNOG" id="COG1576">
    <property type="taxonomic scope" value="Bacteria"/>
</dbReference>
<dbReference type="HOGENOM" id="CLU_100552_1_1_5"/>
<dbReference type="OrthoDB" id="9806643at2"/>
<dbReference type="Proteomes" id="UP000000361">
    <property type="component" value="Chromosome 1"/>
</dbReference>
<dbReference type="GO" id="GO:0005737">
    <property type="term" value="C:cytoplasm"/>
    <property type="evidence" value="ECO:0007669"/>
    <property type="project" value="UniProtKB-SubCell"/>
</dbReference>
<dbReference type="GO" id="GO:0070038">
    <property type="term" value="F:rRNA (pseudouridine-N3-)-methyltransferase activity"/>
    <property type="evidence" value="ECO:0007669"/>
    <property type="project" value="UniProtKB-UniRule"/>
</dbReference>
<dbReference type="CDD" id="cd18081">
    <property type="entry name" value="RlmH-like"/>
    <property type="match status" value="1"/>
</dbReference>
<dbReference type="Gene3D" id="3.40.1280.10">
    <property type="match status" value="1"/>
</dbReference>
<dbReference type="HAMAP" id="MF_00658">
    <property type="entry name" value="23SrRNA_methyltr_H"/>
    <property type="match status" value="1"/>
</dbReference>
<dbReference type="InterPro" id="IPR029028">
    <property type="entry name" value="Alpha/beta_knot_MTases"/>
</dbReference>
<dbReference type="InterPro" id="IPR003742">
    <property type="entry name" value="RlmH-like"/>
</dbReference>
<dbReference type="InterPro" id="IPR029026">
    <property type="entry name" value="tRNA_m1G_MTases_N"/>
</dbReference>
<dbReference type="NCBIfam" id="NF000988">
    <property type="entry name" value="PRK00103.2-2"/>
    <property type="match status" value="1"/>
</dbReference>
<dbReference type="NCBIfam" id="NF000989">
    <property type="entry name" value="PRK00103.2-3"/>
    <property type="match status" value="1"/>
</dbReference>
<dbReference type="PANTHER" id="PTHR33603">
    <property type="entry name" value="METHYLTRANSFERASE"/>
    <property type="match status" value="1"/>
</dbReference>
<dbReference type="PANTHER" id="PTHR33603:SF1">
    <property type="entry name" value="RIBOSOMAL RNA LARGE SUBUNIT METHYLTRANSFERASE H"/>
    <property type="match status" value="1"/>
</dbReference>
<dbReference type="Pfam" id="PF02590">
    <property type="entry name" value="SPOUT_MTase"/>
    <property type="match status" value="1"/>
</dbReference>
<dbReference type="PIRSF" id="PIRSF004505">
    <property type="entry name" value="MT_bac"/>
    <property type="match status" value="1"/>
</dbReference>
<dbReference type="SUPFAM" id="SSF75217">
    <property type="entry name" value="alpha/beta knot"/>
    <property type="match status" value="1"/>
</dbReference>
<protein>
    <recommendedName>
        <fullName evidence="1">Ribosomal RNA large subunit methyltransferase H</fullName>
        <ecNumber evidence="1">2.1.1.177</ecNumber>
    </recommendedName>
    <alternativeName>
        <fullName evidence="1">23S rRNA (pseudouridine1915-N3)-methyltransferase</fullName>
    </alternativeName>
    <alternativeName>
        <fullName evidence="1">23S rRNA m3Psi1915 methyltransferase</fullName>
    </alternativeName>
    <alternativeName>
        <fullName evidence="1">rRNA (pseudouridine-N3-)-methyltransferase RlmH</fullName>
    </alternativeName>
</protein>